<protein>
    <recommendedName>
        <fullName evidence="1">Peptide deformylase</fullName>
        <shortName evidence="1">PDF</shortName>
        <ecNumber evidence="1">3.5.1.88</ecNumber>
    </recommendedName>
    <alternativeName>
        <fullName evidence="1">Polypeptide deformylase</fullName>
    </alternativeName>
</protein>
<dbReference type="EC" id="3.5.1.88" evidence="1"/>
<dbReference type="EMBL" id="AP009240">
    <property type="protein sequence ID" value="BAG79085.1"/>
    <property type="molecule type" value="Genomic_DNA"/>
</dbReference>
<dbReference type="RefSeq" id="WP_000114984.1">
    <property type="nucleotide sequence ID" value="NC_011415.1"/>
</dbReference>
<dbReference type="SMR" id="B6I200"/>
<dbReference type="GeneID" id="89518132"/>
<dbReference type="KEGG" id="ecy:ECSE_3561"/>
<dbReference type="HOGENOM" id="CLU_061901_2_1_6"/>
<dbReference type="Proteomes" id="UP000008199">
    <property type="component" value="Chromosome"/>
</dbReference>
<dbReference type="GO" id="GO:0046872">
    <property type="term" value="F:metal ion binding"/>
    <property type="evidence" value="ECO:0007669"/>
    <property type="project" value="UniProtKB-KW"/>
</dbReference>
<dbReference type="GO" id="GO:0042586">
    <property type="term" value="F:peptide deformylase activity"/>
    <property type="evidence" value="ECO:0007669"/>
    <property type="project" value="UniProtKB-UniRule"/>
</dbReference>
<dbReference type="GO" id="GO:0043686">
    <property type="term" value="P:co-translational protein modification"/>
    <property type="evidence" value="ECO:0007669"/>
    <property type="project" value="TreeGrafter"/>
</dbReference>
<dbReference type="GO" id="GO:0006412">
    <property type="term" value="P:translation"/>
    <property type="evidence" value="ECO:0007669"/>
    <property type="project" value="UniProtKB-UniRule"/>
</dbReference>
<dbReference type="CDD" id="cd00487">
    <property type="entry name" value="Pep_deformylase"/>
    <property type="match status" value="1"/>
</dbReference>
<dbReference type="FunFam" id="3.90.45.10:FF:000001">
    <property type="entry name" value="Peptide deformylase"/>
    <property type="match status" value="1"/>
</dbReference>
<dbReference type="Gene3D" id="3.90.45.10">
    <property type="entry name" value="Peptide deformylase"/>
    <property type="match status" value="1"/>
</dbReference>
<dbReference type="HAMAP" id="MF_00163">
    <property type="entry name" value="Pep_deformylase"/>
    <property type="match status" value="1"/>
</dbReference>
<dbReference type="InterPro" id="IPR023635">
    <property type="entry name" value="Peptide_deformylase"/>
</dbReference>
<dbReference type="InterPro" id="IPR036821">
    <property type="entry name" value="Peptide_deformylase_sf"/>
</dbReference>
<dbReference type="NCBIfam" id="TIGR00079">
    <property type="entry name" value="pept_deformyl"/>
    <property type="match status" value="1"/>
</dbReference>
<dbReference type="NCBIfam" id="NF001159">
    <property type="entry name" value="PRK00150.1-3"/>
    <property type="match status" value="1"/>
</dbReference>
<dbReference type="PANTHER" id="PTHR10458">
    <property type="entry name" value="PEPTIDE DEFORMYLASE"/>
    <property type="match status" value="1"/>
</dbReference>
<dbReference type="PANTHER" id="PTHR10458:SF21">
    <property type="entry name" value="PEPTIDE DEFORMYLASE"/>
    <property type="match status" value="1"/>
</dbReference>
<dbReference type="Pfam" id="PF01327">
    <property type="entry name" value="Pep_deformylase"/>
    <property type="match status" value="1"/>
</dbReference>
<dbReference type="PIRSF" id="PIRSF004749">
    <property type="entry name" value="Pep_def"/>
    <property type="match status" value="1"/>
</dbReference>
<dbReference type="PRINTS" id="PR01576">
    <property type="entry name" value="PDEFORMYLASE"/>
</dbReference>
<dbReference type="SUPFAM" id="SSF56420">
    <property type="entry name" value="Peptide deformylase"/>
    <property type="match status" value="1"/>
</dbReference>
<reference key="1">
    <citation type="journal article" date="2008" name="DNA Res.">
        <title>Complete genome sequence and comparative analysis of the wild-type commensal Escherichia coli strain SE11 isolated from a healthy adult.</title>
        <authorList>
            <person name="Oshima K."/>
            <person name="Toh H."/>
            <person name="Ogura Y."/>
            <person name="Sasamoto H."/>
            <person name="Morita H."/>
            <person name="Park S.-H."/>
            <person name="Ooka T."/>
            <person name="Iyoda S."/>
            <person name="Taylor T.D."/>
            <person name="Hayashi T."/>
            <person name="Itoh K."/>
            <person name="Hattori M."/>
        </authorList>
    </citation>
    <scope>NUCLEOTIDE SEQUENCE [LARGE SCALE GENOMIC DNA]</scope>
    <source>
        <strain>SE11</strain>
    </source>
</reference>
<sequence length="169" mass="19328">MSVLQVLHIPDERLRKVAKPVEEVNAEIQRIVDDMFETMYAEEGIGLAATQVDIHQRIIVIDVSENRDERLVLINPELLEKSGETGIEEGCLSIPEQRALVPRAEKVKIRALDRDGKPFELEADGLLAICIQHEMDHLVGKLFMDYLSPLKQQRIRQKVEKLDRLKARA</sequence>
<comment type="function">
    <text evidence="1">Removes the formyl group from the N-terminal Met of newly synthesized proteins. Requires at least a dipeptide for an efficient rate of reaction. N-terminal L-methionine is a prerequisite for activity but the enzyme has broad specificity at other positions.</text>
</comment>
<comment type="catalytic activity">
    <reaction evidence="1">
        <text>N-terminal N-formyl-L-methionyl-[peptide] + H2O = N-terminal L-methionyl-[peptide] + formate</text>
        <dbReference type="Rhea" id="RHEA:24420"/>
        <dbReference type="Rhea" id="RHEA-COMP:10639"/>
        <dbReference type="Rhea" id="RHEA-COMP:10640"/>
        <dbReference type="ChEBI" id="CHEBI:15377"/>
        <dbReference type="ChEBI" id="CHEBI:15740"/>
        <dbReference type="ChEBI" id="CHEBI:49298"/>
        <dbReference type="ChEBI" id="CHEBI:64731"/>
        <dbReference type="EC" id="3.5.1.88"/>
    </reaction>
</comment>
<comment type="cofactor">
    <cofactor evidence="1">
        <name>Fe(2+)</name>
        <dbReference type="ChEBI" id="CHEBI:29033"/>
    </cofactor>
    <text evidence="1">Binds 1 Fe(2+) ion.</text>
</comment>
<comment type="similarity">
    <text evidence="1">Belongs to the polypeptide deformylase family.</text>
</comment>
<evidence type="ECO:0000255" key="1">
    <source>
        <dbReference type="HAMAP-Rule" id="MF_00163"/>
    </source>
</evidence>
<keyword id="KW-0378">Hydrolase</keyword>
<keyword id="KW-0408">Iron</keyword>
<keyword id="KW-0479">Metal-binding</keyword>
<keyword id="KW-0648">Protein biosynthesis</keyword>
<gene>
    <name evidence="1" type="primary">def</name>
    <name type="ordered locus">ECSE_3561</name>
</gene>
<organism>
    <name type="scientific">Escherichia coli (strain SE11)</name>
    <dbReference type="NCBI Taxonomy" id="409438"/>
    <lineage>
        <taxon>Bacteria</taxon>
        <taxon>Pseudomonadati</taxon>
        <taxon>Pseudomonadota</taxon>
        <taxon>Gammaproteobacteria</taxon>
        <taxon>Enterobacterales</taxon>
        <taxon>Enterobacteriaceae</taxon>
        <taxon>Escherichia</taxon>
    </lineage>
</organism>
<accession>B6I200</accession>
<name>DEF_ECOSE</name>
<feature type="chain" id="PRO_1000097308" description="Peptide deformylase">
    <location>
        <begin position="1"/>
        <end position="169"/>
    </location>
</feature>
<feature type="active site" evidence="1">
    <location>
        <position position="134"/>
    </location>
</feature>
<feature type="binding site" evidence="1">
    <location>
        <position position="91"/>
    </location>
    <ligand>
        <name>Fe cation</name>
        <dbReference type="ChEBI" id="CHEBI:24875"/>
    </ligand>
</feature>
<feature type="binding site" evidence="1">
    <location>
        <position position="133"/>
    </location>
    <ligand>
        <name>Fe cation</name>
        <dbReference type="ChEBI" id="CHEBI:24875"/>
    </ligand>
</feature>
<feature type="binding site" evidence="1">
    <location>
        <position position="137"/>
    </location>
    <ligand>
        <name>Fe cation</name>
        <dbReference type="ChEBI" id="CHEBI:24875"/>
    </ligand>
</feature>
<proteinExistence type="inferred from homology"/>